<keyword id="KW-0053">Apoptosis</keyword>
<keyword id="KW-0106">Calcium</keyword>
<keyword id="KW-1217">Cell adhesion impairing toxin</keyword>
<keyword id="KW-0903">Direct protein sequencing</keyword>
<keyword id="KW-1015">Disulfide bond</keyword>
<keyword id="KW-0325">Glycoprotein</keyword>
<keyword id="KW-1199">Hemostasis impairing toxin</keyword>
<keyword id="KW-0378">Hydrolase</keyword>
<keyword id="KW-0479">Metal-binding</keyword>
<keyword id="KW-0482">Metalloprotease</keyword>
<keyword id="KW-1201">Platelet aggregation inhibiting toxin</keyword>
<keyword id="KW-0645">Protease</keyword>
<keyword id="KW-0873">Pyrrolidone carboxylic acid</keyword>
<keyword id="KW-0964">Secreted</keyword>
<keyword id="KW-0800">Toxin</keyword>
<keyword id="KW-0862">Zinc</keyword>
<keyword id="KW-0865">Zymogen</keyword>
<comment type="function">
    <molecule>Snake venom metalloproteinase graminelysin</molecule>
    <text evidence="6 7 8">Cleaves the alpha chain of fibrinogen (FGA) preferentially and cleaves the beta chain (FGB) either on longer incubation or at high concentrations. Induces apoptosis of endothelial cells (prior to cell detachment).</text>
</comment>
<comment type="function">
    <text evidence="1">Disintegrin: inhibits platelet aggregation induced by ADP, thrombin, platelet-activating factor and collagen. Acts by inhibiting fibrinogen interaction with platelet receptors GPIIb/GPIIIa (ITGA2B/ITGB3) (By similarity).</text>
</comment>
<comment type="cofactor">
    <cofactor evidence="1">
        <name>Zn(2+)</name>
        <dbReference type="ChEBI" id="CHEBI:29105"/>
    </cofactor>
    <text evidence="1">Binds 1 zinc ion per subunit.</text>
</comment>
<comment type="activity regulation">
    <text evidence="6">Inhibited by EDTA.</text>
</comment>
<comment type="subunit">
    <text evidence="6">Monomer.</text>
</comment>
<comment type="subcellular location">
    <subcellularLocation>
        <location>Secreted</location>
    </subcellularLocation>
</comment>
<comment type="tissue specificity">
    <text>Expressed by the venom gland.</text>
</comment>
<comment type="PTM">
    <text>The N-terminus of the metalloproteinase is blocked.</text>
</comment>
<comment type="mass spectrometry">
    <molecule>Snake venom metalloproteinase graminelysin</molecule>
</comment>
<comment type="miscellaneous">
    <text evidence="10">Negative results: the metalloproteinase does not bind von Willebrand factor (vWF).</text>
</comment>
<comment type="similarity">
    <text evidence="9">Belongs to the venom metalloproteinase (M12B) family. P-III subfamily. P-IIIb sub-subfamily.</text>
</comment>
<sequence>KMCGVTQNWESYESTKKASQLNLTPEQQRFPQRYIKLGIFVDHGMYTKYSGNSERITKRVHQMINNINMMCRALNIVTTLSLLEIWSEKDLITVQASAPTTLTLFGAWRETVLLNRTSHDHAQLLTATIFNGNVIGRAPVGGMCDPKRSVAIVRDHNAIVFVVAVTMTHEMGHNLGNHHDEDKCNCNTCIMSKVLSRQPSKYFSECSKDYYQTFLTNHNFQCILNAPLRTDTVSTPVSGNELLEAGEDCDCGSPANPCCDAATCKLRPGAQCGEGLCCDQCRFTSAGTECRAARSECDIAESCAGQSADCPTDDFHRNGQPCLNNHGYCYNGNCPIMFYQCIALFGSNATVGQDGCFDANDIGHKYFHCRKDNEKYIPCAPQDVKCGRLFCTYIYDIDLCRYDDSANGMVAQGTKCADGKVCNSNRQCADVNTAY</sequence>
<reference key="1">
    <citation type="journal article" date="2001" name="Biochem. J.">
        <title>Purification, molecular cloning and mechanism of action of graminelysin I, a snake-venom-derived metalloproteinase that induces apoptosis of human endothelial cells.</title>
        <authorList>
            <person name="Wu W.-B."/>
            <person name="Chang S.C."/>
            <person name="Liau M.-Y."/>
            <person name="Huang T.-F."/>
        </authorList>
    </citation>
    <scope>NUCLEOTIDE SEQUENCE [MRNA]</scope>
    <scope>PROTEIN SEQUENCE OF 46-62; 71-85; 192-199 AND 244-253</scope>
    <scope>FUNCTION OF THE METALLOPROTEINASE</scope>
    <scope>ACTIVITY REGULATION</scope>
    <scope>SUBUNIT</scope>
    <scope>MASS SPECTROMETRY</scope>
    <source>
        <tissue>Venom</tissue>
        <tissue>Venom gland</tissue>
    </source>
</reference>
<reference key="2">
    <citation type="journal article" date="2001" name="Thromb. Haemost.">
        <title>Crotalin, a vWF and GP Ib cleaving metalloproteinase from venom of Crotalus atrox.</title>
        <authorList>
            <person name="Wu W.-B."/>
            <person name="Peng H.-C."/>
            <person name="Huang T.-F."/>
        </authorList>
    </citation>
    <scope>FUNCTION</scope>
</reference>
<reference key="3">
    <citation type="journal article" date="2003" name="Exp. Cell Res.">
        <title>Activation of MMP-2, cleavage of matrix proteins, and adherens junctions during a snake venom metalloproteinase-induced endothelial cell apoptosis.</title>
        <authorList>
            <person name="Wu W.-B."/>
            <person name="Huang T.-F."/>
        </authorList>
    </citation>
    <scope>FUNCTION OF THE METALLOPROTEINASE</scope>
</reference>
<evidence type="ECO:0000250" key="1"/>
<evidence type="ECO:0000255" key="2"/>
<evidence type="ECO:0000255" key="3">
    <source>
        <dbReference type="PROSITE-ProRule" id="PRU00068"/>
    </source>
</evidence>
<evidence type="ECO:0000255" key="4">
    <source>
        <dbReference type="PROSITE-ProRule" id="PRU00276"/>
    </source>
</evidence>
<evidence type="ECO:0000255" key="5">
    <source>
        <dbReference type="PROSITE-ProRule" id="PRU10095"/>
    </source>
</evidence>
<evidence type="ECO:0000269" key="6">
    <source>
    </source>
</evidence>
<evidence type="ECO:0000269" key="7">
    <source>
    </source>
</evidence>
<evidence type="ECO:0000269" key="8">
    <source>
    </source>
</evidence>
<evidence type="ECO:0000305" key="9"/>
<evidence type="ECO:0000305" key="10">
    <source>
    </source>
</evidence>
<organism>
    <name type="scientific">Craspedocephalus gramineus</name>
    <name type="common">Bamboo pit viper</name>
    <name type="synonym">Trimeresurus gramineus</name>
    <dbReference type="NCBI Taxonomy" id="8767"/>
    <lineage>
        <taxon>Eukaryota</taxon>
        <taxon>Metazoa</taxon>
        <taxon>Chordata</taxon>
        <taxon>Craniata</taxon>
        <taxon>Vertebrata</taxon>
        <taxon>Euteleostomi</taxon>
        <taxon>Lepidosauria</taxon>
        <taxon>Squamata</taxon>
        <taxon>Bifurcata</taxon>
        <taxon>Unidentata</taxon>
        <taxon>Episquamata</taxon>
        <taxon>Toxicofera</taxon>
        <taxon>Serpentes</taxon>
        <taxon>Colubroidea</taxon>
        <taxon>Viperidae</taxon>
        <taxon>Crotalinae</taxon>
        <taxon>Craspedocephalus</taxon>
    </lineage>
</organism>
<proteinExistence type="evidence at protein level"/>
<name>VM3G1_CRAGM</name>
<feature type="propeptide" id="PRO_0000322605">
    <location>
        <begin position="1" status="less than"/>
        <end position="26"/>
    </location>
</feature>
<feature type="chain" id="PRO_0000322606" description="Snake venom metalloproteinase graminelysin">
    <location>
        <begin position="27"/>
        <end position="227"/>
    </location>
</feature>
<feature type="propeptide" id="PRO_0000322607" evidence="6">
    <location>
        <begin position="228"/>
        <end position="243"/>
    </location>
</feature>
<feature type="chain" id="PRO_0000322608" description="Disintegrin-like">
    <location>
        <begin position="244"/>
        <end position="435"/>
    </location>
</feature>
<feature type="domain" description="Peptidase M12B" evidence="4">
    <location>
        <begin position="33"/>
        <end position="227"/>
    </location>
</feature>
<feature type="domain" description="Disintegrin" evidence="3">
    <location>
        <begin position="235"/>
        <end position="318"/>
    </location>
</feature>
<feature type="short sequence motif" description="D/ECD-tripeptide">
    <location>
        <begin position="296"/>
        <end position="298"/>
    </location>
</feature>
<feature type="active site" evidence="4 5">
    <location>
        <position position="170"/>
    </location>
</feature>
<feature type="binding site" evidence="1">
    <location>
        <position position="169"/>
    </location>
    <ligand>
        <name>Zn(2+)</name>
        <dbReference type="ChEBI" id="CHEBI:29105"/>
        <note>catalytic</note>
    </ligand>
</feature>
<feature type="binding site" evidence="1">
    <location>
        <position position="173"/>
    </location>
    <ligand>
        <name>Zn(2+)</name>
        <dbReference type="ChEBI" id="CHEBI:29105"/>
        <note>catalytic</note>
    </ligand>
</feature>
<feature type="binding site" evidence="1">
    <location>
        <position position="179"/>
    </location>
    <ligand>
        <name>Zn(2+)</name>
        <dbReference type="ChEBI" id="CHEBI:29105"/>
        <note>catalytic</note>
    </ligand>
</feature>
<feature type="binding site" evidence="1">
    <location>
        <position position="237"/>
    </location>
    <ligand>
        <name>Ca(2+)</name>
        <dbReference type="ChEBI" id="CHEBI:29108"/>
    </ligand>
</feature>
<feature type="binding site" evidence="1">
    <location>
        <position position="240"/>
    </location>
    <ligand>
        <name>Ca(2+)</name>
        <dbReference type="ChEBI" id="CHEBI:29108"/>
    </ligand>
</feature>
<feature type="binding site" evidence="1">
    <location>
        <position position="242"/>
    </location>
    <ligand>
        <name>Ca(2+)</name>
        <dbReference type="ChEBI" id="CHEBI:29108"/>
    </ligand>
</feature>
<feature type="binding site" evidence="1">
    <location>
        <position position="244"/>
    </location>
    <ligand>
        <name>Ca(2+)</name>
        <dbReference type="ChEBI" id="CHEBI:29108"/>
    </ligand>
</feature>
<feature type="binding site" evidence="1">
    <location>
        <position position="247"/>
    </location>
    <ligand>
        <name>Ca(2+)</name>
        <dbReference type="ChEBI" id="CHEBI:29108"/>
    </ligand>
</feature>
<feature type="binding site" evidence="1">
    <location>
        <position position="250"/>
    </location>
    <ligand>
        <name>Ca(2+)</name>
        <dbReference type="ChEBI" id="CHEBI:29108"/>
    </ligand>
</feature>
<feature type="modified residue" description="Pyrrolidone carboxylic acid" evidence="1">
    <location>
        <position position="27"/>
    </location>
</feature>
<feature type="glycosylation site" description="N-linked (GlcNAc...) asparagine" evidence="2">
    <location>
        <position position="115"/>
    </location>
</feature>
<feature type="disulfide bond" evidence="1">
    <location>
        <begin position="144"/>
        <end position="222"/>
    </location>
</feature>
<feature type="disulfide bond" evidence="1">
    <location>
        <begin position="184"/>
        <end position="206"/>
    </location>
</feature>
<feature type="disulfide bond" evidence="1">
    <location>
        <begin position="186"/>
        <end position="189"/>
    </location>
</feature>
<feature type="disulfide bond" evidence="1">
    <location>
        <begin position="249"/>
        <end position="264"/>
    </location>
</feature>
<feature type="disulfide bond" evidence="1">
    <location>
        <begin position="251"/>
        <end position="259"/>
    </location>
</feature>
<feature type="disulfide bond" evidence="1">
    <location>
        <begin position="258"/>
        <end position="281"/>
    </location>
</feature>
<feature type="disulfide bond" evidence="1">
    <location>
        <begin position="272"/>
        <end position="278"/>
    </location>
</feature>
<feature type="disulfide bond" evidence="1">
    <location>
        <begin position="277"/>
        <end position="303"/>
    </location>
</feature>
<feature type="disulfide bond" evidence="1">
    <location>
        <begin position="290"/>
        <end position="310"/>
    </location>
</feature>
<feature type="non-terminal residue">
    <location>
        <position position="1"/>
    </location>
</feature>
<protein>
    <recommendedName>
        <fullName>Zinc metalloproteinase/disintegrin</fullName>
    </recommendedName>
    <component>
        <recommendedName>
            <fullName>Snake venom metalloproteinase graminelysin</fullName>
            <shortName>SVMP</shortName>
            <ecNumber>3.4.24.-</ecNumber>
        </recommendedName>
        <alternativeName>
            <fullName>Graminelysin I</fullName>
        </alternativeName>
    </component>
    <component>
        <recommendedName>
            <fullName>Disintegrin-like</fullName>
        </recommendedName>
    </component>
</protein>
<dbReference type="EC" id="3.4.24.-"/>
<dbReference type="SMR" id="P0C6E8"/>
<dbReference type="GO" id="GO:0005576">
    <property type="term" value="C:extracellular region"/>
    <property type="evidence" value="ECO:0007669"/>
    <property type="project" value="UniProtKB-SubCell"/>
</dbReference>
<dbReference type="GO" id="GO:0005886">
    <property type="term" value="C:plasma membrane"/>
    <property type="evidence" value="ECO:0007669"/>
    <property type="project" value="TreeGrafter"/>
</dbReference>
<dbReference type="GO" id="GO:0046872">
    <property type="term" value="F:metal ion binding"/>
    <property type="evidence" value="ECO:0007669"/>
    <property type="project" value="UniProtKB-KW"/>
</dbReference>
<dbReference type="GO" id="GO:0004222">
    <property type="term" value="F:metalloendopeptidase activity"/>
    <property type="evidence" value="ECO:0007669"/>
    <property type="project" value="InterPro"/>
</dbReference>
<dbReference type="GO" id="GO:0090729">
    <property type="term" value="F:toxin activity"/>
    <property type="evidence" value="ECO:0007669"/>
    <property type="project" value="UniProtKB-KW"/>
</dbReference>
<dbReference type="GO" id="GO:0006915">
    <property type="term" value="P:apoptotic process"/>
    <property type="evidence" value="ECO:0007669"/>
    <property type="project" value="UniProtKB-KW"/>
</dbReference>
<dbReference type="GO" id="GO:0006508">
    <property type="term" value="P:proteolysis"/>
    <property type="evidence" value="ECO:0007669"/>
    <property type="project" value="UniProtKB-KW"/>
</dbReference>
<dbReference type="CDD" id="cd04269">
    <property type="entry name" value="ZnMc_adamalysin_II_like"/>
    <property type="match status" value="1"/>
</dbReference>
<dbReference type="FunFam" id="4.10.70.10:FF:000003">
    <property type="entry name" value="Disintegrin and metalloproteinase domain-containing protein 17"/>
    <property type="match status" value="1"/>
</dbReference>
<dbReference type="FunFam" id="3.40.390.10:FF:000002">
    <property type="entry name" value="Disintegrin and metalloproteinase domain-containing protein 22"/>
    <property type="match status" value="1"/>
</dbReference>
<dbReference type="Gene3D" id="3.40.390.10">
    <property type="entry name" value="Collagenase (Catalytic Domain)"/>
    <property type="match status" value="1"/>
</dbReference>
<dbReference type="Gene3D" id="4.10.70.10">
    <property type="entry name" value="Disintegrin domain"/>
    <property type="match status" value="1"/>
</dbReference>
<dbReference type="InterPro" id="IPR006586">
    <property type="entry name" value="ADAM_Cys-rich"/>
</dbReference>
<dbReference type="InterPro" id="IPR018358">
    <property type="entry name" value="Disintegrin_CS"/>
</dbReference>
<dbReference type="InterPro" id="IPR001762">
    <property type="entry name" value="Disintegrin_dom"/>
</dbReference>
<dbReference type="InterPro" id="IPR036436">
    <property type="entry name" value="Disintegrin_dom_sf"/>
</dbReference>
<dbReference type="InterPro" id="IPR024079">
    <property type="entry name" value="MetalloPept_cat_dom_sf"/>
</dbReference>
<dbReference type="InterPro" id="IPR001590">
    <property type="entry name" value="Peptidase_M12B"/>
</dbReference>
<dbReference type="InterPro" id="IPR034027">
    <property type="entry name" value="Reprolysin_adamalysin"/>
</dbReference>
<dbReference type="PANTHER" id="PTHR11905">
    <property type="entry name" value="ADAM A DISINTEGRIN AND METALLOPROTEASE DOMAIN"/>
    <property type="match status" value="1"/>
</dbReference>
<dbReference type="PANTHER" id="PTHR11905:SF32">
    <property type="entry name" value="DISINTEGRIN AND METALLOPROTEINASE DOMAIN-CONTAINING PROTEIN 28"/>
    <property type="match status" value="1"/>
</dbReference>
<dbReference type="Pfam" id="PF08516">
    <property type="entry name" value="ADAM_CR"/>
    <property type="match status" value="1"/>
</dbReference>
<dbReference type="Pfam" id="PF00200">
    <property type="entry name" value="Disintegrin"/>
    <property type="match status" value="1"/>
</dbReference>
<dbReference type="Pfam" id="PF01421">
    <property type="entry name" value="Reprolysin"/>
    <property type="match status" value="1"/>
</dbReference>
<dbReference type="PRINTS" id="PR00289">
    <property type="entry name" value="DISINTEGRIN"/>
</dbReference>
<dbReference type="SMART" id="SM00608">
    <property type="entry name" value="ACR"/>
    <property type="match status" value="1"/>
</dbReference>
<dbReference type="SMART" id="SM00050">
    <property type="entry name" value="DISIN"/>
    <property type="match status" value="1"/>
</dbReference>
<dbReference type="SUPFAM" id="SSF57552">
    <property type="entry name" value="Blood coagulation inhibitor (disintegrin)"/>
    <property type="match status" value="1"/>
</dbReference>
<dbReference type="SUPFAM" id="SSF55486">
    <property type="entry name" value="Metalloproteases ('zincins'), catalytic domain"/>
    <property type="match status" value="1"/>
</dbReference>
<dbReference type="PROSITE" id="PS50215">
    <property type="entry name" value="ADAM_MEPRO"/>
    <property type="match status" value="1"/>
</dbReference>
<dbReference type="PROSITE" id="PS00427">
    <property type="entry name" value="DISINTEGRIN_1"/>
    <property type="match status" value="1"/>
</dbReference>
<dbReference type="PROSITE" id="PS50214">
    <property type="entry name" value="DISINTEGRIN_2"/>
    <property type="match status" value="1"/>
</dbReference>
<dbReference type="PROSITE" id="PS00142">
    <property type="entry name" value="ZINC_PROTEASE"/>
    <property type="match status" value="1"/>
</dbReference>
<accession>P0C6E8</accession>